<accession>A1JNT0</accession>
<gene>
    <name evidence="1" type="primary">tgt</name>
    <name type="ordered locus">YE3166</name>
</gene>
<sequence>MKYELQKTDGRARRGRLVFERGVVETPAFMPVGTYGTVKGMTPEEVKETGAQILLGNTFHLWLRPGQEIMKLHGDLHDFMQWHGPILTDSGGFQVFSLGAMRKIKEEGVTFQNPINGDKVFLSPEKSMEIQYDLGSDIVMIFDECTPYPADWDYAKRSMEMSLRWAKRSRDRFDELNNKNALFGIIQGGVYEDLRDVSVKGLVDIGFDGYAVGGLAVGEPKEDMHRILEHVCPQIPADKPRYLMGVGKPEDLVEGVRRGIDMFDCVMPTRNARNGHLFVTDGVVKIRNAKHKSDTATLDEHCDCYTCRNYSRAYLHHLDRCNEILGARLNTIHNLRYYQRLMASLRQAIEEGKLESFVEYFYGRIGKPVPPLSPQLTD</sequence>
<proteinExistence type="inferred from homology"/>
<keyword id="KW-0328">Glycosyltransferase</keyword>
<keyword id="KW-0479">Metal-binding</keyword>
<keyword id="KW-0671">Queuosine biosynthesis</keyword>
<keyword id="KW-0808">Transferase</keyword>
<keyword id="KW-0819">tRNA processing</keyword>
<keyword id="KW-0862">Zinc</keyword>
<protein>
    <recommendedName>
        <fullName evidence="1">Queuine tRNA-ribosyltransferase</fullName>
        <ecNumber evidence="1">2.4.2.29</ecNumber>
    </recommendedName>
    <alternativeName>
        <fullName evidence="1">Guanine insertion enzyme</fullName>
    </alternativeName>
    <alternativeName>
        <fullName evidence="1">tRNA-guanine transglycosylase</fullName>
    </alternativeName>
</protein>
<feature type="chain" id="PRO_1000016891" description="Queuine tRNA-ribosyltransferase">
    <location>
        <begin position="1"/>
        <end position="378"/>
    </location>
</feature>
<feature type="region of interest" description="RNA binding" evidence="1">
    <location>
        <begin position="245"/>
        <end position="251"/>
    </location>
</feature>
<feature type="region of interest" description="RNA binding; important for wobble base 34 recognition" evidence="1">
    <location>
        <begin position="269"/>
        <end position="273"/>
    </location>
</feature>
<feature type="active site" description="Proton acceptor" evidence="1">
    <location>
        <position position="89"/>
    </location>
</feature>
<feature type="active site" description="Nucleophile" evidence="1">
    <location>
        <position position="264"/>
    </location>
</feature>
<feature type="binding site" evidence="1">
    <location>
        <begin position="89"/>
        <end position="93"/>
    </location>
    <ligand>
        <name>substrate</name>
    </ligand>
</feature>
<feature type="binding site" evidence="1">
    <location>
        <position position="143"/>
    </location>
    <ligand>
        <name>substrate</name>
    </ligand>
</feature>
<feature type="binding site" evidence="1">
    <location>
        <position position="187"/>
    </location>
    <ligand>
        <name>substrate</name>
    </ligand>
</feature>
<feature type="binding site" evidence="1">
    <location>
        <position position="214"/>
    </location>
    <ligand>
        <name>substrate</name>
    </ligand>
</feature>
<feature type="binding site" evidence="1">
    <location>
        <position position="302"/>
    </location>
    <ligand>
        <name>Zn(2+)</name>
        <dbReference type="ChEBI" id="CHEBI:29105"/>
    </ligand>
</feature>
<feature type="binding site" evidence="1">
    <location>
        <position position="304"/>
    </location>
    <ligand>
        <name>Zn(2+)</name>
        <dbReference type="ChEBI" id="CHEBI:29105"/>
    </ligand>
</feature>
<feature type="binding site" evidence="1">
    <location>
        <position position="307"/>
    </location>
    <ligand>
        <name>Zn(2+)</name>
        <dbReference type="ChEBI" id="CHEBI:29105"/>
    </ligand>
</feature>
<feature type="binding site" evidence="1">
    <location>
        <position position="333"/>
    </location>
    <ligand>
        <name>Zn(2+)</name>
        <dbReference type="ChEBI" id="CHEBI:29105"/>
    </ligand>
</feature>
<name>TGT_YERE8</name>
<evidence type="ECO:0000255" key="1">
    <source>
        <dbReference type="HAMAP-Rule" id="MF_00168"/>
    </source>
</evidence>
<dbReference type="EC" id="2.4.2.29" evidence="1"/>
<dbReference type="EMBL" id="AM286415">
    <property type="protein sequence ID" value="CAL13200.1"/>
    <property type="molecule type" value="Genomic_DNA"/>
</dbReference>
<dbReference type="RefSeq" id="WP_011816911.1">
    <property type="nucleotide sequence ID" value="NC_008800.1"/>
</dbReference>
<dbReference type="RefSeq" id="YP_001007347.1">
    <property type="nucleotide sequence ID" value="NC_008800.1"/>
</dbReference>
<dbReference type="SMR" id="A1JNT0"/>
<dbReference type="KEGG" id="yen:YE3166"/>
<dbReference type="PATRIC" id="fig|393305.7.peg.3367"/>
<dbReference type="eggNOG" id="COG0343">
    <property type="taxonomic scope" value="Bacteria"/>
</dbReference>
<dbReference type="HOGENOM" id="CLU_022060_0_1_6"/>
<dbReference type="OrthoDB" id="9805417at2"/>
<dbReference type="UniPathway" id="UPA00392"/>
<dbReference type="Proteomes" id="UP000000642">
    <property type="component" value="Chromosome"/>
</dbReference>
<dbReference type="GO" id="GO:0005829">
    <property type="term" value="C:cytosol"/>
    <property type="evidence" value="ECO:0007669"/>
    <property type="project" value="TreeGrafter"/>
</dbReference>
<dbReference type="GO" id="GO:0046872">
    <property type="term" value="F:metal ion binding"/>
    <property type="evidence" value="ECO:0007669"/>
    <property type="project" value="UniProtKB-KW"/>
</dbReference>
<dbReference type="GO" id="GO:0008479">
    <property type="term" value="F:tRNA-guanosine(34) queuine transglycosylase activity"/>
    <property type="evidence" value="ECO:0007669"/>
    <property type="project" value="UniProtKB-UniRule"/>
</dbReference>
<dbReference type="GO" id="GO:0008616">
    <property type="term" value="P:queuosine biosynthetic process"/>
    <property type="evidence" value="ECO:0007669"/>
    <property type="project" value="UniProtKB-UniRule"/>
</dbReference>
<dbReference type="GO" id="GO:0002099">
    <property type="term" value="P:tRNA wobble guanine modification"/>
    <property type="evidence" value="ECO:0007669"/>
    <property type="project" value="TreeGrafter"/>
</dbReference>
<dbReference type="GO" id="GO:0101030">
    <property type="term" value="P:tRNA-guanine transglycosylation"/>
    <property type="evidence" value="ECO:0007669"/>
    <property type="project" value="InterPro"/>
</dbReference>
<dbReference type="FunFam" id="3.20.20.105:FF:000001">
    <property type="entry name" value="Queuine tRNA-ribosyltransferase"/>
    <property type="match status" value="1"/>
</dbReference>
<dbReference type="Gene3D" id="3.20.20.105">
    <property type="entry name" value="Queuine tRNA-ribosyltransferase-like"/>
    <property type="match status" value="1"/>
</dbReference>
<dbReference type="HAMAP" id="MF_00168">
    <property type="entry name" value="Q_tRNA_Tgt"/>
    <property type="match status" value="1"/>
</dbReference>
<dbReference type="InterPro" id="IPR050076">
    <property type="entry name" value="ArchSynthase1/Queuine_TRR"/>
</dbReference>
<dbReference type="InterPro" id="IPR004803">
    <property type="entry name" value="TGT"/>
</dbReference>
<dbReference type="InterPro" id="IPR036511">
    <property type="entry name" value="TGT-like_sf"/>
</dbReference>
<dbReference type="InterPro" id="IPR002616">
    <property type="entry name" value="tRNA_ribo_trans-like"/>
</dbReference>
<dbReference type="NCBIfam" id="TIGR00430">
    <property type="entry name" value="Q_tRNA_tgt"/>
    <property type="match status" value="1"/>
</dbReference>
<dbReference type="NCBIfam" id="TIGR00449">
    <property type="entry name" value="tgt_general"/>
    <property type="match status" value="1"/>
</dbReference>
<dbReference type="PANTHER" id="PTHR46499">
    <property type="entry name" value="QUEUINE TRNA-RIBOSYLTRANSFERASE"/>
    <property type="match status" value="1"/>
</dbReference>
<dbReference type="PANTHER" id="PTHR46499:SF1">
    <property type="entry name" value="QUEUINE TRNA-RIBOSYLTRANSFERASE"/>
    <property type="match status" value="1"/>
</dbReference>
<dbReference type="Pfam" id="PF01702">
    <property type="entry name" value="TGT"/>
    <property type="match status" value="1"/>
</dbReference>
<dbReference type="SUPFAM" id="SSF51713">
    <property type="entry name" value="tRNA-guanine transglycosylase"/>
    <property type="match status" value="1"/>
</dbReference>
<reference key="1">
    <citation type="journal article" date="2006" name="PLoS Genet.">
        <title>The complete genome sequence and comparative genome analysis of the high pathogenicity Yersinia enterocolitica strain 8081.</title>
        <authorList>
            <person name="Thomson N.R."/>
            <person name="Howard S."/>
            <person name="Wren B.W."/>
            <person name="Holden M.T.G."/>
            <person name="Crossman L."/>
            <person name="Challis G.L."/>
            <person name="Churcher C."/>
            <person name="Mungall K."/>
            <person name="Brooks K."/>
            <person name="Chillingworth T."/>
            <person name="Feltwell T."/>
            <person name="Abdellah Z."/>
            <person name="Hauser H."/>
            <person name="Jagels K."/>
            <person name="Maddison M."/>
            <person name="Moule S."/>
            <person name="Sanders M."/>
            <person name="Whitehead S."/>
            <person name="Quail M.A."/>
            <person name="Dougan G."/>
            <person name="Parkhill J."/>
            <person name="Prentice M.B."/>
        </authorList>
    </citation>
    <scope>NUCLEOTIDE SEQUENCE [LARGE SCALE GENOMIC DNA]</scope>
    <source>
        <strain>NCTC 13174 / 8081</strain>
    </source>
</reference>
<organism>
    <name type="scientific">Yersinia enterocolitica serotype O:8 / biotype 1B (strain NCTC 13174 / 8081)</name>
    <dbReference type="NCBI Taxonomy" id="393305"/>
    <lineage>
        <taxon>Bacteria</taxon>
        <taxon>Pseudomonadati</taxon>
        <taxon>Pseudomonadota</taxon>
        <taxon>Gammaproteobacteria</taxon>
        <taxon>Enterobacterales</taxon>
        <taxon>Yersiniaceae</taxon>
        <taxon>Yersinia</taxon>
    </lineage>
</organism>
<comment type="function">
    <text evidence="1">Catalyzes the base-exchange of a guanine (G) residue with the queuine precursor 7-aminomethyl-7-deazaguanine (PreQ1) at position 34 (anticodon wobble position) in tRNAs with GU(N) anticodons (tRNA-Asp, -Asn, -His and -Tyr). Catalysis occurs through a double-displacement mechanism. The nucleophile active site attacks the C1' of nucleotide 34 to detach the guanine base from the RNA, forming a covalent enzyme-RNA intermediate. The proton acceptor active site deprotonates the incoming PreQ1, allowing a nucleophilic attack on the C1' of the ribose to form the product. After dissociation, two additional enzymatic reactions on the tRNA convert PreQ1 to queuine (Q), resulting in the hypermodified nucleoside queuosine (7-(((4,5-cis-dihydroxy-2-cyclopenten-1-yl)amino)methyl)-7-deazaguanosine).</text>
</comment>
<comment type="catalytic activity">
    <reaction evidence="1">
        <text>7-aminomethyl-7-carbaguanine + guanosine(34) in tRNA = 7-aminomethyl-7-carbaguanosine(34) in tRNA + guanine</text>
        <dbReference type="Rhea" id="RHEA:24104"/>
        <dbReference type="Rhea" id="RHEA-COMP:10341"/>
        <dbReference type="Rhea" id="RHEA-COMP:10342"/>
        <dbReference type="ChEBI" id="CHEBI:16235"/>
        <dbReference type="ChEBI" id="CHEBI:58703"/>
        <dbReference type="ChEBI" id="CHEBI:74269"/>
        <dbReference type="ChEBI" id="CHEBI:82833"/>
        <dbReference type="EC" id="2.4.2.29"/>
    </reaction>
</comment>
<comment type="cofactor">
    <cofactor evidence="1">
        <name>Zn(2+)</name>
        <dbReference type="ChEBI" id="CHEBI:29105"/>
    </cofactor>
    <text evidence="1">Binds 1 zinc ion per subunit.</text>
</comment>
<comment type="pathway">
    <text evidence="1">tRNA modification; tRNA-queuosine biosynthesis.</text>
</comment>
<comment type="subunit">
    <text evidence="1">Homodimer. Within each dimer, one monomer is responsible for RNA recognition and catalysis, while the other monomer binds to the replacement base PreQ1.</text>
</comment>
<comment type="similarity">
    <text evidence="1">Belongs to the queuine tRNA-ribosyltransferase family.</text>
</comment>